<accession>B7UIJ0</accession>
<feature type="chain" id="PRO_1000196971" description="Sugar fermentation stimulation protein A">
    <location>
        <begin position="1"/>
        <end position="234"/>
    </location>
</feature>
<feature type="DNA-binding region" description="H-T-H motif" evidence="1">
    <location>
        <begin position="201"/>
        <end position="220"/>
    </location>
</feature>
<sequence>MEFSPPLQRATLIQRYKRFLADVITPDGRELTLHCPNTGAMTGCATPGDTVWYSTSDNTKRKYPHTWELTQSQSGAIICVNTLWANRLTKEAILNESISELAGYSSLKSEVKYGAERSRIDFMLQADSRPDCYIEVKSVTLAENEQGYFPDAVTERGQKHLRELMSVAAEGQRAVIFFAVLHSAITRFSPARHIDEKYAQLLSEAQQRGVEILAYKAELSAEGMALKKSLPVTL</sequence>
<reference key="1">
    <citation type="journal article" date="2009" name="J. Bacteriol.">
        <title>Complete genome sequence and comparative genome analysis of enteropathogenic Escherichia coli O127:H6 strain E2348/69.</title>
        <authorList>
            <person name="Iguchi A."/>
            <person name="Thomson N.R."/>
            <person name="Ogura Y."/>
            <person name="Saunders D."/>
            <person name="Ooka T."/>
            <person name="Henderson I.R."/>
            <person name="Harris D."/>
            <person name="Asadulghani M."/>
            <person name="Kurokawa K."/>
            <person name="Dean P."/>
            <person name="Kenny B."/>
            <person name="Quail M.A."/>
            <person name="Thurston S."/>
            <person name="Dougan G."/>
            <person name="Hayashi T."/>
            <person name="Parkhill J."/>
            <person name="Frankel G."/>
        </authorList>
    </citation>
    <scope>NUCLEOTIDE SEQUENCE [LARGE SCALE GENOMIC DNA]</scope>
    <source>
        <strain>E2348/69 / EPEC</strain>
    </source>
</reference>
<organism>
    <name type="scientific">Escherichia coli O127:H6 (strain E2348/69 / EPEC)</name>
    <dbReference type="NCBI Taxonomy" id="574521"/>
    <lineage>
        <taxon>Bacteria</taxon>
        <taxon>Pseudomonadati</taxon>
        <taxon>Pseudomonadota</taxon>
        <taxon>Gammaproteobacteria</taxon>
        <taxon>Enterobacterales</taxon>
        <taxon>Enterobacteriaceae</taxon>
        <taxon>Escherichia</taxon>
    </lineage>
</organism>
<name>SFSA_ECO27</name>
<gene>
    <name evidence="1" type="primary">sfsA</name>
    <name type="ordered locus">E2348C_0149</name>
</gene>
<proteinExistence type="inferred from homology"/>
<dbReference type="EMBL" id="FM180568">
    <property type="protein sequence ID" value="CAS07697.1"/>
    <property type="molecule type" value="Genomic_DNA"/>
</dbReference>
<dbReference type="RefSeq" id="WP_000396047.1">
    <property type="nucleotide sequence ID" value="NC_011601.1"/>
</dbReference>
<dbReference type="SMR" id="B7UIJ0"/>
<dbReference type="KEGG" id="ecg:E2348C_0149"/>
<dbReference type="HOGENOM" id="CLU_052299_2_0_6"/>
<dbReference type="Proteomes" id="UP000008205">
    <property type="component" value="Chromosome"/>
</dbReference>
<dbReference type="GO" id="GO:0003677">
    <property type="term" value="F:DNA binding"/>
    <property type="evidence" value="ECO:0007669"/>
    <property type="project" value="UniProtKB-KW"/>
</dbReference>
<dbReference type="CDD" id="cd22359">
    <property type="entry name" value="SfsA-like_bacterial"/>
    <property type="match status" value="1"/>
</dbReference>
<dbReference type="FunFam" id="2.40.50.580:FF:000001">
    <property type="entry name" value="Sugar fermentation stimulation protein A"/>
    <property type="match status" value="1"/>
</dbReference>
<dbReference type="FunFam" id="3.40.1350.60:FF:000001">
    <property type="entry name" value="Sugar fermentation stimulation protein A"/>
    <property type="match status" value="1"/>
</dbReference>
<dbReference type="Gene3D" id="2.40.50.580">
    <property type="match status" value="1"/>
</dbReference>
<dbReference type="Gene3D" id="3.40.1350.60">
    <property type="match status" value="1"/>
</dbReference>
<dbReference type="HAMAP" id="MF_00095">
    <property type="entry name" value="SfsA"/>
    <property type="match status" value="1"/>
</dbReference>
<dbReference type="InterPro" id="IPR005224">
    <property type="entry name" value="SfsA"/>
</dbReference>
<dbReference type="InterPro" id="IPR040452">
    <property type="entry name" value="SfsA_C"/>
</dbReference>
<dbReference type="InterPro" id="IPR041465">
    <property type="entry name" value="SfsA_N"/>
</dbReference>
<dbReference type="NCBIfam" id="TIGR00230">
    <property type="entry name" value="sfsA"/>
    <property type="match status" value="1"/>
</dbReference>
<dbReference type="PANTHER" id="PTHR30545">
    <property type="entry name" value="SUGAR FERMENTATION STIMULATION PROTEIN A"/>
    <property type="match status" value="1"/>
</dbReference>
<dbReference type="PANTHER" id="PTHR30545:SF2">
    <property type="entry name" value="SUGAR FERMENTATION STIMULATION PROTEIN A"/>
    <property type="match status" value="1"/>
</dbReference>
<dbReference type="Pfam" id="PF03749">
    <property type="entry name" value="SfsA"/>
    <property type="match status" value="1"/>
</dbReference>
<dbReference type="Pfam" id="PF17746">
    <property type="entry name" value="SfsA_N"/>
    <property type="match status" value="1"/>
</dbReference>
<comment type="function">
    <text evidence="1">Binds to DNA non-specifically. Could be a regulatory factor involved in maltose metabolism.</text>
</comment>
<comment type="similarity">
    <text evidence="1">Belongs to the SfsA family.</text>
</comment>
<keyword id="KW-0238">DNA-binding</keyword>
<keyword id="KW-1185">Reference proteome</keyword>
<protein>
    <recommendedName>
        <fullName evidence="1">Sugar fermentation stimulation protein A</fullName>
    </recommendedName>
</protein>
<evidence type="ECO:0000255" key="1">
    <source>
        <dbReference type="HAMAP-Rule" id="MF_00095"/>
    </source>
</evidence>